<comment type="function">
    <text evidence="1">Regulates arginine biosynthesis genes.</text>
</comment>
<comment type="pathway">
    <text>Amino-acid biosynthesis; L-arginine biosynthesis [regulation].</text>
</comment>
<comment type="subcellular location">
    <subcellularLocation>
        <location evidence="1">Cytoplasm</location>
    </subcellularLocation>
</comment>
<comment type="similarity">
    <text evidence="1">Belongs to the ArgR family.</text>
</comment>
<keyword id="KW-0028">Amino-acid biosynthesis</keyword>
<keyword id="KW-0055">Arginine biosynthesis</keyword>
<keyword id="KW-0963">Cytoplasm</keyword>
<keyword id="KW-0238">DNA-binding</keyword>
<keyword id="KW-0678">Repressor</keyword>
<keyword id="KW-0804">Transcription</keyword>
<keyword id="KW-0805">Transcription regulation</keyword>
<name>ARGR_ECOHS</name>
<sequence>MRSSAKQEELVKAFKALLKEEKFSSQGEIVAALQEQGFDNINQSKVSRMLTKFGAVRTRNAKMEMVYCLPAELGVPTTSSPLKNLVLDIDYNDAVVVIHTSPGAAQLIARLLDSLGKAEGILGTIAGDDTIFTTPANGFTVKDLYEAILELFDQEL</sequence>
<proteinExistence type="inferred from homology"/>
<accession>A8A546</accession>
<reference key="1">
    <citation type="journal article" date="2008" name="J. Bacteriol.">
        <title>The pangenome structure of Escherichia coli: comparative genomic analysis of E. coli commensal and pathogenic isolates.</title>
        <authorList>
            <person name="Rasko D.A."/>
            <person name="Rosovitz M.J."/>
            <person name="Myers G.S.A."/>
            <person name="Mongodin E.F."/>
            <person name="Fricke W.F."/>
            <person name="Gajer P."/>
            <person name="Crabtree J."/>
            <person name="Sebaihia M."/>
            <person name="Thomson N.R."/>
            <person name="Chaudhuri R."/>
            <person name="Henderson I.R."/>
            <person name="Sperandio V."/>
            <person name="Ravel J."/>
        </authorList>
    </citation>
    <scope>NUCLEOTIDE SEQUENCE [LARGE SCALE GENOMIC DNA]</scope>
    <source>
        <strain>HS</strain>
    </source>
</reference>
<gene>
    <name evidence="1" type="primary">argR</name>
    <name type="ordered locus">EcHS_A3426</name>
</gene>
<protein>
    <recommendedName>
        <fullName evidence="1">Arginine repressor</fullName>
    </recommendedName>
</protein>
<evidence type="ECO:0000255" key="1">
    <source>
        <dbReference type="HAMAP-Rule" id="MF_00173"/>
    </source>
</evidence>
<dbReference type="EMBL" id="CP000802">
    <property type="protein sequence ID" value="ABV07650.1"/>
    <property type="molecule type" value="Genomic_DNA"/>
</dbReference>
<dbReference type="RefSeq" id="WP_001257846.1">
    <property type="nucleotide sequence ID" value="NC_009800.1"/>
</dbReference>
<dbReference type="SMR" id="A8A546"/>
<dbReference type="GeneID" id="93778748"/>
<dbReference type="KEGG" id="ecx:EcHS_A3426"/>
<dbReference type="HOGENOM" id="CLU_097103_2_0_6"/>
<dbReference type="UniPathway" id="UPA00068"/>
<dbReference type="GO" id="GO:0005737">
    <property type="term" value="C:cytoplasm"/>
    <property type="evidence" value="ECO:0007669"/>
    <property type="project" value="UniProtKB-SubCell"/>
</dbReference>
<dbReference type="GO" id="GO:0034618">
    <property type="term" value="F:arginine binding"/>
    <property type="evidence" value="ECO:0007669"/>
    <property type="project" value="InterPro"/>
</dbReference>
<dbReference type="GO" id="GO:0003677">
    <property type="term" value="F:DNA binding"/>
    <property type="evidence" value="ECO:0007669"/>
    <property type="project" value="UniProtKB-KW"/>
</dbReference>
<dbReference type="GO" id="GO:0003700">
    <property type="term" value="F:DNA-binding transcription factor activity"/>
    <property type="evidence" value="ECO:0007669"/>
    <property type="project" value="UniProtKB-UniRule"/>
</dbReference>
<dbReference type="GO" id="GO:0006526">
    <property type="term" value="P:L-arginine biosynthetic process"/>
    <property type="evidence" value="ECO:0007669"/>
    <property type="project" value="UniProtKB-UniPathway"/>
</dbReference>
<dbReference type="GO" id="GO:0051259">
    <property type="term" value="P:protein complex oligomerization"/>
    <property type="evidence" value="ECO:0007669"/>
    <property type="project" value="InterPro"/>
</dbReference>
<dbReference type="GO" id="GO:1900079">
    <property type="term" value="P:regulation of arginine biosynthetic process"/>
    <property type="evidence" value="ECO:0007669"/>
    <property type="project" value="UniProtKB-UniRule"/>
</dbReference>
<dbReference type="FunFam" id="1.10.10.10:FF:000074">
    <property type="entry name" value="Arginine repressor"/>
    <property type="match status" value="1"/>
</dbReference>
<dbReference type="FunFam" id="3.30.1360.40:FF:000004">
    <property type="entry name" value="Arginine repressor"/>
    <property type="match status" value="1"/>
</dbReference>
<dbReference type="Gene3D" id="3.30.1360.40">
    <property type="match status" value="1"/>
</dbReference>
<dbReference type="Gene3D" id="1.10.10.10">
    <property type="entry name" value="Winged helix-like DNA-binding domain superfamily/Winged helix DNA-binding domain"/>
    <property type="match status" value="1"/>
</dbReference>
<dbReference type="HAMAP" id="MF_00173">
    <property type="entry name" value="Arg_repressor"/>
    <property type="match status" value="1"/>
</dbReference>
<dbReference type="InterPro" id="IPR001669">
    <property type="entry name" value="Arg_repress"/>
</dbReference>
<dbReference type="InterPro" id="IPR020899">
    <property type="entry name" value="Arg_repress_C"/>
</dbReference>
<dbReference type="InterPro" id="IPR036251">
    <property type="entry name" value="Arg_repress_C_sf"/>
</dbReference>
<dbReference type="InterPro" id="IPR020900">
    <property type="entry name" value="Arg_repress_DNA-bd"/>
</dbReference>
<dbReference type="InterPro" id="IPR036388">
    <property type="entry name" value="WH-like_DNA-bd_sf"/>
</dbReference>
<dbReference type="InterPro" id="IPR036390">
    <property type="entry name" value="WH_DNA-bd_sf"/>
</dbReference>
<dbReference type="NCBIfam" id="TIGR01529">
    <property type="entry name" value="argR_whole"/>
    <property type="match status" value="1"/>
</dbReference>
<dbReference type="NCBIfam" id="NF003457">
    <property type="entry name" value="PRK05066.1"/>
    <property type="match status" value="1"/>
</dbReference>
<dbReference type="PANTHER" id="PTHR34471">
    <property type="entry name" value="ARGININE REPRESSOR"/>
    <property type="match status" value="1"/>
</dbReference>
<dbReference type="PANTHER" id="PTHR34471:SF1">
    <property type="entry name" value="ARGININE REPRESSOR"/>
    <property type="match status" value="1"/>
</dbReference>
<dbReference type="Pfam" id="PF01316">
    <property type="entry name" value="Arg_repressor"/>
    <property type="match status" value="1"/>
</dbReference>
<dbReference type="Pfam" id="PF02863">
    <property type="entry name" value="Arg_repressor_C"/>
    <property type="match status" value="1"/>
</dbReference>
<dbReference type="PRINTS" id="PR01467">
    <property type="entry name" value="ARGREPRESSOR"/>
</dbReference>
<dbReference type="SUPFAM" id="SSF55252">
    <property type="entry name" value="C-terminal domain of arginine repressor"/>
    <property type="match status" value="1"/>
</dbReference>
<dbReference type="SUPFAM" id="SSF46785">
    <property type="entry name" value="Winged helix' DNA-binding domain"/>
    <property type="match status" value="1"/>
</dbReference>
<organism>
    <name type="scientific">Escherichia coli O9:H4 (strain HS)</name>
    <dbReference type="NCBI Taxonomy" id="331112"/>
    <lineage>
        <taxon>Bacteria</taxon>
        <taxon>Pseudomonadati</taxon>
        <taxon>Pseudomonadota</taxon>
        <taxon>Gammaproteobacteria</taxon>
        <taxon>Enterobacterales</taxon>
        <taxon>Enterobacteriaceae</taxon>
        <taxon>Escherichia</taxon>
    </lineage>
</organism>
<feature type="chain" id="PRO_1000058322" description="Arginine repressor">
    <location>
        <begin position="1"/>
        <end position="156"/>
    </location>
</feature>